<keyword id="KW-0963">Cytoplasm</keyword>
<keyword id="KW-0227">DNA damage</keyword>
<keyword id="KW-0234">DNA repair</keyword>
<keyword id="KW-0378">Hydrolase</keyword>
<keyword id="KW-1185">Reference proteome</keyword>
<dbReference type="EC" id="3.2.2.27" evidence="1"/>
<dbReference type="EMBL" id="AE015924">
    <property type="protein sequence ID" value="AAQ65466.1"/>
    <property type="molecule type" value="Genomic_DNA"/>
</dbReference>
<dbReference type="RefSeq" id="WP_005874890.1">
    <property type="nucleotide sequence ID" value="NC_002950.2"/>
</dbReference>
<dbReference type="SMR" id="Q7MXF6"/>
<dbReference type="STRING" id="242619.PG_0237"/>
<dbReference type="EnsemblBacteria" id="AAQ65466">
    <property type="protein sequence ID" value="AAQ65466"/>
    <property type="gene ID" value="PG_0237"/>
</dbReference>
<dbReference type="KEGG" id="pgi:PG_0237"/>
<dbReference type="eggNOG" id="COG0692">
    <property type="taxonomic scope" value="Bacteria"/>
</dbReference>
<dbReference type="HOGENOM" id="CLU_032162_3_0_10"/>
<dbReference type="Proteomes" id="UP000000588">
    <property type="component" value="Chromosome"/>
</dbReference>
<dbReference type="GO" id="GO:0005737">
    <property type="term" value="C:cytoplasm"/>
    <property type="evidence" value="ECO:0007669"/>
    <property type="project" value="UniProtKB-SubCell"/>
</dbReference>
<dbReference type="GO" id="GO:0004844">
    <property type="term" value="F:uracil DNA N-glycosylase activity"/>
    <property type="evidence" value="ECO:0007669"/>
    <property type="project" value="UniProtKB-UniRule"/>
</dbReference>
<dbReference type="GO" id="GO:0097510">
    <property type="term" value="P:base-excision repair, AP site formation via deaminated base removal"/>
    <property type="evidence" value="ECO:0007669"/>
    <property type="project" value="TreeGrafter"/>
</dbReference>
<dbReference type="CDD" id="cd10027">
    <property type="entry name" value="UDG-F1-like"/>
    <property type="match status" value="1"/>
</dbReference>
<dbReference type="FunFam" id="3.40.470.10:FF:000001">
    <property type="entry name" value="Uracil-DNA glycosylase"/>
    <property type="match status" value="1"/>
</dbReference>
<dbReference type="Gene3D" id="3.40.470.10">
    <property type="entry name" value="Uracil-DNA glycosylase-like domain"/>
    <property type="match status" value="1"/>
</dbReference>
<dbReference type="HAMAP" id="MF_00148">
    <property type="entry name" value="UDG"/>
    <property type="match status" value="1"/>
</dbReference>
<dbReference type="InterPro" id="IPR002043">
    <property type="entry name" value="UDG_fam1"/>
</dbReference>
<dbReference type="InterPro" id="IPR018085">
    <property type="entry name" value="Ura-DNA_Glyclase_AS"/>
</dbReference>
<dbReference type="InterPro" id="IPR005122">
    <property type="entry name" value="Uracil-DNA_glycosylase-like"/>
</dbReference>
<dbReference type="InterPro" id="IPR036895">
    <property type="entry name" value="Uracil-DNA_glycosylase-like_sf"/>
</dbReference>
<dbReference type="NCBIfam" id="NF003588">
    <property type="entry name" value="PRK05254.1-1"/>
    <property type="match status" value="1"/>
</dbReference>
<dbReference type="NCBIfam" id="NF003589">
    <property type="entry name" value="PRK05254.1-2"/>
    <property type="match status" value="1"/>
</dbReference>
<dbReference type="NCBIfam" id="NF003591">
    <property type="entry name" value="PRK05254.1-4"/>
    <property type="match status" value="1"/>
</dbReference>
<dbReference type="NCBIfam" id="NF003592">
    <property type="entry name" value="PRK05254.1-5"/>
    <property type="match status" value="1"/>
</dbReference>
<dbReference type="NCBIfam" id="TIGR00628">
    <property type="entry name" value="ung"/>
    <property type="match status" value="1"/>
</dbReference>
<dbReference type="PANTHER" id="PTHR11264">
    <property type="entry name" value="URACIL-DNA GLYCOSYLASE"/>
    <property type="match status" value="1"/>
</dbReference>
<dbReference type="PANTHER" id="PTHR11264:SF0">
    <property type="entry name" value="URACIL-DNA GLYCOSYLASE"/>
    <property type="match status" value="1"/>
</dbReference>
<dbReference type="Pfam" id="PF03167">
    <property type="entry name" value="UDG"/>
    <property type="match status" value="1"/>
</dbReference>
<dbReference type="SMART" id="SM00986">
    <property type="entry name" value="UDG"/>
    <property type="match status" value="1"/>
</dbReference>
<dbReference type="SMART" id="SM00987">
    <property type="entry name" value="UreE_C"/>
    <property type="match status" value="1"/>
</dbReference>
<dbReference type="SUPFAM" id="SSF52141">
    <property type="entry name" value="Uracil-DNA glycosylase-like"/>
    <property type="match status" value="1"/>
</dbReference>
<dbReference type="PROSITE" id="PS00130">
    <property type="entry name" value="U_DNA_GLYCOSYLASE"/>
    <property type="match status" value="1"/>
</dbReference>
<gene>
    <name evidence="1" type="primary">ung</name>
    <name type="ordered locus">PG_0237</name>
</gene>
<evidence type="ECO:0000255" key="1">
    <source>
        <dbReference type="HAMAP-Rule" id="MF_00148"/>
    </source>
</evidence>
<accession>Q7MXF6</accession>
<feature type="chain" id="PRO_0000176126" description="Uracil-DNA glycosylase">
    <location>
        <begin position="1"/>
        <end position="222"/>
    </location>
</feature>
<feature type="active site" description="Proton acceptor" evidence="1">
    <location>
        <position position="66"/>
    </location>
</feature>
<proteinExistence type="inferred from homology"/>
<organism>
    <name type="scientific">Porphyromonas gingivalis (strain ATCC BAA-308 / W83)</name>
    <dbReference type="NCBI Taxonomy" id="242619"/>
    <lineage>
        <taxon>Bacteria</taxon>
        <taxon>Pseudomonadati</taxon>
        <taxon>Bacteroidota</taxon>
        <taxon>Bacteroidia</taxon>
        <taxon>Bacteroidales</taxon>
        <taxon>Porphyromonadaceae</taxon>
        <taxon>Porphyromonas</taxon>
    </lineage>
</organism>
<comment type="function">
    <text evidence="1">Excises uracil residues from the DNA which can arise as a result of misincorporation of dUMP residues by DNA polymerase or due to deamination of cytosine.</text>
</comment>
<comment type="catalytic activity">
    <reaction evidence="1">
        <text>Hydrolyzes single-stranded DNA or mismatched double-stranded DNA and polynucleotides, releasing free uracil.</text>
        <dbReference type="EC" id="3.2.2.27"/>
    </reaction>
</comment>
<comment type="subcellular location">
    <subcellularLocation>
        <location evidence="1">Cytoplasm</location>
    </subcellularLocation>
</comment>
<comment type="similarity">
    <text evidence="1">Belongs to the uracil-DNA glycosylase (UDG) superfamily. UNG family.</text>
</comment>
<protein>
    <recommendedName>
        <fullName evidence="1">Uracil-DNA glycosylase</fullName>
        <shortName evidence="1">UDG</shortName>
        <ecNumber evidence="1">3.2.2.27</ecNumber>
    </recommendedName>
</protein>
<sequence length="222" mass="25248">MKEVRIEAGWKKVLQEEFDKFYFEKLTDFVREEYRQSPIYPPARFIFRAFDTCPFDRVKVVILGQDPYHEPGQAEGLAFSVPTGIPIPPSLRNICEEIRTDTGQPAHIDGGSLLPWVEQGVLLLNATLTVRASQAGSHQGHGWETFTDAAIEALAKRREHLVFLLWGSYARRKSAMIDPRCHLILEAPHPSPLSAHRGFFGCKHFSRTNAYLRQHGIAPIVW</sequence>
<name>UNG_PORGI</name>
<reference key="1">
    <citation type="journal article" date="2003" name="J. Bacteriol.">
        <title>Complete genome sequence of the oral pathogenic bacterium Porphyromonas gingivalis strain W83.</title>
        <authorList>
            <person name="Nelson K.E."/>
            <person name="Fleischmann R.D."/>
            <person name="DeBoy R.T."/>
            <person name="Paulsen I.T."/>
            <person name="Fouts D.E."/>
            <person name="Eisen J.A."/>
            <person name="Daugherty S.C."/>
            <person name="Dodson R.J."/>
            <person name="Durkin A.S."/>
            <person name="Gwinn M.L."/>
            <person name="Haft D.H."/>
            <person name="Kolonay J.F."/>
            <person name="Nelson W.C."/>
            <person name="Mason T.M."/>
            <person name="Tallon L."/>
            <person name="Gray J."/>
            <person name="Granger D."/>
            <person name="Tettelin H."/>
            <person name="Dong H."/>
            <person name="Galvin J.L."/>
            <person name="Duncan M.J."/>
            <person name="Dewhirst F.E."/>
            <person name="Fraser C.M."/>
        </authorList>
    </citation>
    <scope>NUCLEOTIDE SEQUENCE [LARGE SCALE GENOMIC DNA]</scope>
    <source>
        <strain>ATCC BAA-308 / W83</strain>
    </source>
</reference>